<reference key="1">
    <citation type="journal article" date="2003" name="Lancet">
        <title>Genome sequence of Vibrio parahaemolyticus: a pathogenic mechanism distinct from that of V. cholerae.</title>
        <authorList>
            <person name="Makino K."/>
            <person name="Oshima K."/>
            <person name="Kurokawa K."/>
            <person name="Yokoyama K."/>
            <person name="Uda T."/>
            <person name="Tagomori K."/>
            <person name="Iijima Y."/>
            <person name="Najima M."/>
            <person name="Nakano M."/>
            <person name="Yamashita A."/>
            <person name="Kubota Y."/>
            <person name="Kimura S."/>
            <person name="Yasunaga T."/>
            <person name="Honda T."/>
            <person name="Shinagawa H."/>
            <person name="Hattori M."/>
            <person name="Iida T."/>
        </authorList>
    </citation>
    <scope>NUCLEOTIDE SEQUENCE [LARGE SCALE GENOMIC DNA]</scope>
    <source>
        <strain>RIMD 2210633</strain>
    </source>
</reference>
<keyword id="KW-0687">Ribonucleoprotein</keyword>
<keyword id="KW-0689">Ribosomal protein</keyword>
<keyword id="KW-0694">RNA-binding</keyword>
<keyword id="KW-0699">rRNA-binding</keyword>
<accession>Q87QD9</accession>
<organism>
    <name type="scientific">Vibrio parahaemolyticus serotype O3:K6 (strain RIMD 2210633)</name>
    <dbReference type="NCBI Taxonomy" id="223926"/>
    <lineage>
        <taxon>Bacteria</taxon>
        <taxon>Pseudomonadati</taxon>
        <taxon>Pseudomonadota</taxon>
        <taxon>Gammaproteobacteria</taxon>
        <taxon>Vibrionales</taxon>
        <taxon>Vibrionaceae</taxon>
        <taxon>Vibrio</taxon>
    </lineage>
</organism>
<dbReference type="EMBL" id="BA000031">
    <property type="protein sequence ID" value="BAC59473.1"/>
    <property type="molecule type" value="Genomic_DNA"/>
</dbReference>
<dbReference type="RefSeq" id="NP_797589.1">
    <property type="nucleotide sequence ID" value="NC_004603.1"/>
</dbReference>
<dbReference type="RefSeq" id="WP_005378066.1">
    <property type="nucleotide sequence ID" value="NC_004603.1"/>
</dbReference>
<dbReference type="SMR" id="Q87QD9"/>
<dbReference type="GeneID" id="75168081"/>
<dbReference type="KEGG" id="vpa:VP1210"/>
<dbReference type="PATRIC" id="fig|223926.6.peg.1150"/>
<dbReference type="eggNOG" id="COG1825">
    <property type="taxonomic scope" value="Bacteria"/>
</dbReference>
<dbReference type="HOGENOM" id="CLU_137946_0_0_6"/>
<dbReference type="Proteomes" id="UP000002493">
    <property type="component" value="Chromosome 1"/>
</dbReference>
<dbReference type="GO" id="GO:0022625">
    <property type="term" value="C:cytosolic large ribosomal subunit"/>
    <property type="evidence" value="ECO:0007669"/>
    <property type="project" value="TreeGrafter"/>
</dbReference>
<dbReference type="GO" id="GO:0008097">
    <property type="term" value="F:5S rRNA binding"/>
    <property type="evidence" value="ECO:0007669"/>
    <property type="project" value="InterPro"/>
</dbReference>
<dbReference type="GO" id="GO:0003735">
    <property type="term" value="F:structural constituent of ribosome"/>
    <property type="evidence" value="ECO:0007669"/>
    <property type="project" value="InterPro"/>
</dbReference>
<dbReference type="GO" id="GO:0006412">
    <property type="term" value="P:translation"/>
    <property type="evidence" value="ECO:0007669"/>
    <property type="project" value="UniProtKB-UniRule"/>
</dbReference>
<dbReference type="CDD" id="cd00495">
    <property type="entry name" value="Ribosomal_L25_TL5_CTC"/>
    <property type="match status" value="1"/>
</dbReference>
<dbReference type="FunFam" id="2.40.240.10:FF:000002">
    <property type="entry name" value="50S ribosomal protein L25"/>
    <property type="match status" value="1"/>
</dbReference>
<dbReference type="Gene3D" id="2.40.240.10">
    <property type="entry name" value="Ribosomal Protein L25, Chain P"/>
    <property type="match status" value="1"/>
</dbReference>
<dbReference type="HAMAP" id="MF_01336">
    <property type="entry name" value="Ribosomal_bL25"/>
    <property type="match status" value="1"/>
</dbReference>
<dbReference type="InterPro" id="IPR020056">
    <property type="entry name" value="Rbsml_bL25/Gln-tRNA_synth_N"/>
</dbReference>
<dbReference type="InterPro" id="IPR011035">
    <property type="entry name" value="Ribosomal_bL25/Gln-tRNA_synth"/>
</dbReference>
<dbReference type="InterPro" id="IPR020055">
    <property type="entry name" value="Ribosomal_bL25_short"/>
</dbReference>
<dbReference type="InterPro" id="IPR029751">
    <property type="entry name" value="Ribosomal_L25_dom"/>
</dbReference>
<dbReference type="InterPro" id="IPR020930">
    <property type="entry name" value="Ribosomal_uL5_bac-type"/>
</dbReference>
<dbReference type="NCBIfam" id="NF004612">
    <property type="entry name" value="PRK05943.1"/>
    <property type="match status" value="1"/>
</dbReference>
<dbReference type="PANTHER" id="PTHR33284">
    <property type="entry name" value="RIBOSOMAL PROTEIN L25/GLN-TRNA SYNTHETASE, ANTI-CODON-BINDING DOMAIN-CONTAINING PROTEIN"/>
    <property type="match status" value="1"/>
</dbReference>
<dbReference type="PANTHER" id="PTHR33284:SF1">
    <property type="entry name" value="RIBOSOMAL PROTEIN L25_GLN-TRNA SYNTHETASE, ANTI-CODON-BINDING DOMAIN-CONTAINING PROTEIN"/>
    <property type="match status" value="1"/>
</dbReference>
<dbReference type="Pfam" id="PF01386">
    <property type="entry name" value="Ribosomal_L25p"/>
    <property type="match status" value="1"/>
</dbReference>
<dbReference type="SUPFAM" id="SSF50715">
    <property type="entry name" value="Ribosomal protein L25-like"/>
    <property type="match status" value="1"/>
</dbReference>
<sequence length="92" mass="10414">MKFEAVVRTELGKGASRRLRHAGKFPAVVYGGEEAAVAIVLNHDDIVNQMDKPEFYEGIVLVIDGKEVKVKPQDVQRHAFKPKVEHMDFIRI</sequence>
<gene>
    <name evidence="1" type="primary">rplY</name>
    <name type="ordered locus">VP1210</name>
</gene>
<evidence type="ECO:0000255" key="1">
    <source>
        <dbReference type="HAMAP-Rule" id="MF_01336"/>
    </source>
</evidence>
<evidence type="ECO:0000305" key="2"/>
<comment type="function">
    <text evidence="1">This is one of the proteins that binds to the 5S RNA in the ribosome where it forms part of the central protuberance.</text>
</comment>
<comment type="subunit">
    <text evidence="1">Part of the 50S ribosomal subunit; part of the 5S rRNA/L5/L18/L25 subcomplex. Contacts the 5S rRNA. Binds to the 5S rRNA independently of L5 and L18.</text>
</comment>
<comment type="similarity">
    <text evidence="1">Belongs to the bacterial ribosomal protein bL25 family.</text>
</comment>
<protein>
    <recommendedName>
        <fullName evidence="1">Large ribosomal subunit protein bL25</fullName>
    </recommendedName>
    <alternativeName>
        <fullName evidence="2">50S ribosomal protein L25</fullName>
    </alternativeName>
</protein>
<feature type="chain" id="PRO_0000181500" description="Large ribosomal subunit protein bL25">
    <location>
        <begin position="1"/>
        <end position="92"/>
    </location>
</feature>
<name>RL25_VIBPA</name>
<proteinExistence type="inferred from homology"/>